<comment type="subcellular location">
    <subcellularLocation>
        <location evidence="1">Cytoplasm</location>
    </subcellularLocation>
    <subcellularLocation>
        <location evidence="1">Nucleus</location>
    </subcellularLocation>
</comment>
<protein>
    <recommendedName>
        <fullName>Uncharacterized WD repeat-containing protein C824.04</fullName>
    </recommendedName>
</protein>
<proteinExistence type="predicted"/>
<sequence>MDIGILSSLKPAQSFRDNSLGSFINSIDYSDSGEYVATTCSADDTVQIYDALDPKQVHTITCFETGIEVARFTHHDHNLLLSTTKGNKDIQYVSIYDNKRISYFSGHTDIVSSIEVSPIEDQFVSTANDKTLKLWKMNQSSRCLGNLDLPSLGIPAYDPTGLVFAVACHSLSRIFLYDVRNYGSDPFSTFTIDDSRYLSRFSFPPMMPEWKHMEFSNDGKCILLSTRANVHYILDAFSGDVLSRLEDFQELPFSNNFHGGSTTFVPQGNFVIGSADDRTLNVWNLRHTFHHKGKTRPPEHRIVSQSIINPGLVKYNPRYDQLLTAGSQLVFWLPEKYALTS</sequence>
<name>YIQ4_SCHPO</name>
<feature type="chain" id="PRO_0000316562" description="Uncharacterized WD repeat-containing protein C824.04">
    <location>
        <begin position="1"/>
        <end position="341"/>
    </location>
</feature>
<feature type="repeat" description="WD 1">
    <location>
        <begin position="19"/>
        <end position="59"/>
    </location>
</feature>
<feature type="repeat" description="WD 2">
    <location>
        <begin position="106"/>
        <end position="145"/>
    </location>
</feature>
<feature type="repeat" description="WD 3">
    <location>
        <begin position="252"/>
        <end position="293"/>
    </location>
</feature>
<feature type="repeat" description="WD 4">
    <location>
        <begin position="303"/>
        <end position="341"/>
    </location>
</feature>
<accession>Q9UT39</accession>
<keyword id="KW-0963">Cytoplasm</keyword>
<keyword id="KW-0539">Nucleus</keyword>
<keyword id="KW-1185">Reference proteome</keyword>
<keyword id="KW-0677">Repeat</keyword>
<keyword id="KW-0853">WD repeat</keyword>
<gene>
    <name type="ORF">SPAC824.04</name>
</gene>
<dbReference type="EMBL" id="CU329670">
    <property type="protein sequence ID" value="CAB57334.1"/>
    <property type="molecule type" value="Genomic_DNA"/>
</dbReference>
<dbReference type="PIR" id="T39105">
    <property type="entry name" value="T39105"/>
</dbReference>
<dbReference type="SMR" id="Q9UT39"/>
<dbReference type="BioGRID" id="279291">
    <property type="interactions" value="104"/>
</dbReference>
<dbReference type="FunCoup" id="Q9UT39">
    <property type="interactions" value="11"/>
</dbReference>
<dbReference type="STRING" id="284812.Q9UT39"/>
<dbReference type="PaxDb" id="4896-SPAC824.04.1"/>
<dbReference type="EnsemblFungi" id="SPAC824.04.1">
    <property type="protein sequence ID" value="SPAC824.04.1:pep"/>
    <property type="gene ID" value="SPAC824.04"/>
</dbReference>
<dbReference type="KEGG" id="spo:2542845"/>
<dbReference type="PomBase" id="SPAC824.04"/>
<dbReference type="VEuPathDB" id="FungiDB:SPAC824.04"/>
<dbReference type="eggNOG" id="KOG1446">
    <property type="taxonomic scope" value="Eukaryota"/>
</dbReference>
<dbReference type="HOGENOM" id="CLU_044117_3_0_1"/>
<dbReference type="InParanoid" id="Q9UT39"/>
<dbReference type="OMA" id="KICVLNG"/>
<dbReference type="PhylomeDB" id="Q9UT39"/>
<dbReference type="PRO" id="PR:Q9UT39"/>
<dbReference type="Proteomes" id="UP000002485">
    <property type="component" value="Chromosome I"/>
</dbReference>
<dbReference type="GO" id="GO:0000785">
    <property type="term" value="C:chromatin"/>
    <property type="evidence" value="ECO:0000314"/>
    <property type="project" value="PomBase"/>
</dbReference>
<dbReference type="GO" id="GO:0005829">
    <property type="term" value="C:cytosol"/>
    <property type="evidence" value="ECO:0007005"/>
    <property type="project" value="PomBase"/>
</dbReference>
<dbReference type="GO" id="GO:1990567">
    <property type="term" value="C:DPS complex"/>
    <property type="evidence" value="ECO:0000314"/>
    <property type="project" value="PomBase"/>
</dbReference>
<dbReference type="GO" id="GO:0005847">
    <property type="term" value="C:mRNA cleavage and polyadenylation specificity factor complex"/>
    <property type="evidence" value="ECO:0000314"/>
    <property type="project" value="PomBase"/>
</dbReference>
<dbReference type="GO" id="GO:0005634">
    <property type="term" value="C:nucleus"/>
    <property type="evidence" value="ECO:0007005"/>
    <property type="project" value="PomBase"/>
</dbReference>
<dbReference type="GO" id="GO:0003682">
    <property type="term" value="F:chromatin binding"/>
    <property type="evidence" value="ECO:0000318"/>
    <property type="project" value="GO_Central"/>
</dbReference>
<dbReference type="GO" id="GO:0180010">
    <property type="term" value="P:co-transcriptional mRNA 3'-end processing, cleavage and polyadenylation pathway"/>
    <property type="evidence" value="ECO:0000305"/>
    <property type="project" value="PomBase"/>
</dbReference>
<dbReference type="GO" id="GO:0090052">
    <property type="term" value="P:regulation of pericentric heterochromatin formation"/>
    <property type="evidence" value="ECO:0000315"/>
    <property type="project" value="PomBase"/>
</dbReference>
<dbReference type="GO" id="GO:1902801">
    <property type="term" value="P:regulation of siRNA-independent facultative heterochromatin formation"/>
    <property type="evidence" value="ECO:0000315"/>
    <property type="project" value="PomBase"/>
</dbReference>
<dbReference type="Gene3D" id="2.130.10.10">
    <property type="entry name" value="YVTN repeat-like/Quinoprotein amine dehydrogenase"/>
    <property type="match status" value="1"/>
</dbReference>
<dbReference type="InterPro" id="IPR037867">
    <property type="entry name" value="Swd2/WDR82"/>
</dbReference>
<dbReference type="InterPro" id="IPR015943">
    <property type="entry name" value="WD40/YVTN_repeat-like_dom_sf"/>
</dbReference>
<dbReference type="InterPro" id="IPR036322">
    <property type="entry name" value="WD40_repeat_dom_sf"/>
</dbReference>
<dbReference type="InterPro" id="IPR001680">
    <property type="entry name" value="WD40_rpt"/>
</dbReference>
<dbReference type="PANTHER" id="PTHR19861:SF8">
    <property type="entry name" value="WD REPEAT PROTEIN"/>
    <property type="match status" value="1"/>
</dbReference>
<dbReference type="PANTHER" id="PTHR19861">
    <property type="entry name" value="WD40 REPEAT PROTEIN SWD2"/>
    <property type="match status" value="1"/>
</dbReference>
<dbReference type="Pfam" id="PF00400">
    <property type="entry name" value="WD40"/>
    <property type="match status" value="2"/>
</dbReference>
<dbReference type="SMART" id="SM00320">
    <property type="entry name" value="WD40"/>
    <property type="match status" value="3"/>
</dbReference>
<dbReference type="SUPFAM" id="SSF50978">
    <property type="entry name" value="WD40 repeat-like"/>
    <property type="match status" value="1"/>
</dbReference>
<dbReference type="PROSITE" id="PS00678">
    <property type="entry name" value="WD_REPEATS_1"/>
    <property type="match status" value="1"/>
</dbReference>
<dbReference type="PROSITE" id="PS50082">
    <property type="entry name" value="WD_REPEATS_2"/>
    <property type="match status" value="1"/>
</dbReference>
<dbReference type="PROSITE" id="PS50294">
    <property type="entry name" value="WD_REPEATS_REGION"/>
    <property type="match status" value="1"/>
</dbReference>
<organism>
    <name type="scientific">Schizosaccharomyces pombe (strain 972 / ATCC 24843)</name>
    <name type="common">Fission yeast</name>
    <dbReference type="NCBI Taxonomy" id="284812"/>
    <lineage>
        <taxon>Eukaryota</taxon>
        <taxon>Fungi</taxon>
        <taxon>Dikarya</taxon>
        <taxon>Ascomycota</taxon>
        <taxon>Taphrinomycotina</taxon>
        <taxon>Schizosaccharomycetes</taxon>
        <taxon>Schizosaccharomycetales</taxon>
        <taxon>Schizosaccharomycetaceae</taxon>
        <taxon>Schizosaccharomyces</taxon>
    </lineage>
</organism>
<evidence type="ECO:0000269" key="1">
    <source>
    </source>
</evidence>
<reference key="1">
    <citation type="journal article" date="2002" name="Nature">
        <title>The genome sequence of Schizosaccharomyces pombe.</title>
        <authorList>
            <person name="Wood V."/>
            <person name="Gwilliam R."/>
            <person name="Rajandream M.A."/>
            <person name="Lyne M.H."/>
            <person name="Lyne R."/>
            <person name="Stewart A."/>
            <person name="Sgouros J.G."/>
            <person name="Peat N."/>
            <person name="Hayles J."/>
            <person name="Baker S.G."/>
            <person name="Basham D."/>
            <person name="Bowman S."/>
            <person name="Brooks K."/>
            <person name="Brown D."/>
            <person name="Brown S."/>
            <person name="Chillingworth T."/>
            <person name="Churcher C.M."/>
            <person name="Collins M."/>
            <person name="Connor R."/>
            <person name="Cronin A."/>
            <person name="Davis P."/>
            <person name="Feltwell T."/>
            <person name="Fraser A."/>
            <person name="Gentles S."/>
            <person name="Goble A."/>
            <person name="Hamlin N."/>
            <person name="Harris D.E."/>
            <person name="Hidalgo J."/>
            <person name="Hodgson G."/>
            <person name="Holroyd S."/>
            <person name="Hornsby T."/>
            <person name="Howarth S."/>
            <person name="Huckle E.J."/>
            <person name="Hunt S."/>
            <person name="Jagels K."/>
            <person name="James K.D."/>
            <person name="Jones L."/>
            <person name="Jones M."/>
            <person name="Leather S."/>
            <person name="McDonald S."/>
            <person name="McLean J."/>
            <person name="Mooney P."/>
            <person name="Moule S."/>
            <person name="Mungall K.L."/>
            <person name="Murphy L.D."/>
            <person name="Niblett D."/>
            <person name="Odell C."/>
            <person name="Oliver K."/>
            <person name="O'Neil S."/>
            <person name="Pearson D."/>
            <person name="Quail M.A."/>
            <person name="Rabbinowitsch E."/>
            <person name="Rutherford K.M."/>
            <person name="Rutter S."/>
            <person name="Saunders D."/>
            <person name="Seeger K."/>
            <person name="Sharp S."/>
            <person name="Skelton J."/>
            <person name="Simmonds M.N."/>
            <person name="Squares R."/>
            <person name="Squares S."/>
            <person name="Stevens K."/>
            <person name="Taylor K."/>
            <person name="Taylor R.G."/>
            <person name="Tivey A."/>
            <person name="Walsh S.V."/>
            <person name="Warren T."/>
            <person name="Whitehead S."/>
            <person name="Woodward J.R."/>
            <person name="Volckaert G."/>
            <person name="Aert R."/>
            <person name="Robben J."/>
            <person name="Grymonprez B."/>
            <person name="Weltjens I."/>
            <person name="Vanstreels E."/>
            <person name="Rieger M."/>
            <person name="Schaefer M."/>
            <person name="Mueller-Auer S."/>
            <person name="Gabel C."/>
            <person name="Fuchs M."/>
            <person name="Duesterhoeft A."/>
            <person name="Fritzc C."/>
            <person name="Holzer E."/>
            <person name="Moestl D."/>
            <person name="Hilbert H."/>
            <person name="Borzym K."/>
            <person name="Langer I."/>
            <person name="Beck A."/>
            <person name="Lehrach H."/>
            <person name="Reinhardt R."/>
            <person name="Pohl T.M."/>
            <person name="Eger P."/>
            <person name="Zimmermann W."/>
            <person name="Wedler H."/>
            <person name="Wambutt R."/>
            <person name="Purnelle B."/>
            <person name="Goffeau A."/>
            <person name="Cadieu E."/>
            <person name="Dreano S."/>
            <person name="Gloux S."/>
            <person name="Lelaure V."/>
            <person name="Mottier S."/>
            <person name="Galibert F."/>
            <person name="Aves S.J."/>
            <person name="Xiang Z."/>
            <person name="Hunt C."/>
            <person name="Moore K."/>
            <person name="Hurst S.M."/>
            <person name="Lucas M."/>
            <person name="Rochet M."/>
            <person name="Gaillardin C."/>
            <person name="Tallada V.A."/>
            <person name="Garzon A."/>
            <person name="Thode G."/>
            <person name="Daga R.R."/>
            <person name="Cruzado L."/>
            <person name="Jimenez J."/>
            <person name="Sanchez M."/>
            <person name="del Rey F."/>
            <person name="Benito J."/>
            <person name="Dominguez A."/>
            <person name="Revuelta J.L."/>
            <person name="Moreno S."/>
            <person name="Armstrong J."/>
            <person name="Forsburg S.L."/>
            <person name="Cerutti L."/>
            <person name="Lowe T."/>
            <person name="McCombie W.R."/>
            <person name="Paulsen I."/>
            <person name="Potashkin J."/>
            <person name="Shpakovski G.V."/>
            <person name="Ussery D."/>
            <person name="Barrell B.G."/>
            <person name="Nurse P."/>
        </authorList>
    </citation>
    <scope>NUCLEOTIDE SEQUENCE [LARGE SCALE GENOMIC DNA]</scope>
    <source>
        <strain>972 / ATCC 24843</strain>
    </source>
</reference>
<reference key="2">
    <citation type="journal article" date="2006" name="Nat. Biotechnol.">
        <title>ORFeome cloning and global analysis of protein localization in the fission yeast Schizosaccharomyces pombe.</title>
        <authorList>
            <person name="Matsuyama A."/>
            <person name="Arai R."/>
            <person name="Yashiroda Y."/>
            <person name="Shirai A."/>
            <person name="Kamata A."/>
            <person name="Sekido S."/>
            <person name="Kobayashi Y."/>
            <person name="Hashimoto A."/>
            <person name="Hamamoto M."/>
            <person name="Hiraoka Y."/>
            <person name="Horinouchi S."/>
            <person name="Yoshida M."/>
        </authorList>
    </citation>
    <scope>SUBCELLULAR LOCATION [LARGE SCALE ANALYSIS]</scope>
</reference>